<accession>P10126</accession>
<accession>Q61511</accession>
<accession>Q6ZWN2</accession>
<accession>Q8BMB8</accession>
<accession>Q8BVS8</accession>
<accession>Q99KU5</accession>
<organism>
    <name type="scientific">Mus musculus</name>
    <name type="common">Mouse</name>
    <dbReference type="NCBI Taxonomy" id="10090"/>
    <lineage>
        <taxon>Eukaryota</taxon>
        <taxon>Metazoa</taxon>
        <taxon>Chordata</taxon>
        <taxon>Craniata</taxon>
        <taxon>Vertebrata</taxon>
        <taxon>Euteleostomi</taxon>
        <taxon>Mammalia</taxon>
        <taxon>Eutheria</taxon>
        <taxon>Euarchontoglires</taxon>
        <taxon>Glires</taxon>
        <taxon>Rodentia</taxon>
        <taxon>Myomorpha</taxon>
        <taxon>Muroidea</taxon>
        <taxon>Muridae</taxon>
        <taxon>Murinae</taxon>
        <taxon>Mus</taxon>
        <taxon>Mus</taxon>
    </lineage>
</organism>
<sequence>MGKEKTHINIVVIGHVDSGKSTTTGHLIYKCGGIDKRTIEKFEKEAAEMGKGSFKYAWVLDKLKAERERGITIDISLWKFETSKYYVTIIDAPGHRDFIKNMITGTSQADCAVLIVAAGVGEFEAGISKNGQTREHALLAYTLGVKQLIVGVNKMDSTEPPYSQKRYEEIVKEVSTYIKKIGYNPDTVAFVPISGWNGDNMLEPSANMPWFKGWKVTRKDGSASGTTLLEALDCILPPTRPTDKPLRLPLQDVYKIGGIGTVPVGRVETGVLKPGMVVTFAPVNVTTEVKSVEMHHEALSEALPGDNVGFNVKNVSVKDVRRGNVAGDSKNDPPMEAAGFTAQVIILNHPGQISAGYAPVLDCHTAHIACKFAELKEKIDRRSGKKLEDGPKFLKSGDAAIVDMVPGKPMCVESFSDYPPLGRFAVRDMRQTVAVGVIKAVDKKAAGAGKVTKSAQKAQKAK</sequence>
<proteinExistence type="evidence at protein level"/>
<name>EF1A1_MOUSE</name>
<feature type="initiator methionine" description="Removed" evidence="2">
    <location>
        <position position="1"/>
    </location>
</feature>
<feature type="chain" id="PRO_0000090886" description="Elongation factor 1-alpha 1">
    <location>
        <begin position="2"/>
        <end position="462"/>
    </location>
</feature>
<feature type="domain" description="tr-type G">
    <location>
        <begin position="5"/>
        <end position="242"/>
    </location>
</feature>
<feature type="region of interest" description="G1" evidence="4">
    <location>
        <begin position="14"/>
        <end position="21"/>
    </location>
</feature>
<feature type="region of interest" description="G2" evidence="4">
    <location>
        <begin position="70"/>
        <end position="74"/>
    </location>
</feature>
<feature type="region of interest" description="G3" evidence="4">
    <location>
        <begin position="91"/>
        <end position="94"/>
    </location>
</feature>
<feature type="region of interest" description="G4" evidence="4">
    <location>
        <begin position="153"/>
        <end position="156"/>
    </location>
</feature>
<feature type="region of interest" description="G5" evidence="4">
    <location>
        <begin position="194"/>
        <end position="196"/>
    </location>
</feature>
<feature type="binding site" evidence="3">
    <location>
        <begin position="14"/>
        <end position="21"/>
    </location>
    <ligand>
        <name>GTP</name>
        <dbReference type="ChEBI" id="CHEBI:37565"/>
    </ligand>
</feature>
<feature type="binding site" evidence="3">
    <location>
        <begin position="153"/>
        <end position="156"/>
    </location>
    <ligand>
        <name>GTP</name>
        <dbReference type="ChEBI" id="CHEBI:37565"/>
    </ligand>
</feature>
<feature type="binding site" evidence="3">
    <location>
        <begin position="194"/>
        <end position="196"/>
    </location>
    <ligand>
        <name>GTP</name>
        <dbReference type="ChEBI" id="CHEBI:37565"/>
    </ligand>
</feature>
<feature type="modified residue" description="N,N,N-trimethylglycine" evidence="2">
    <location>
        <position position="2"/>
    </location>
</feature>
<feature type="modified residue" description="N6,N6,N6-trimethyllysine; alternate" evidence="2">
    <location>
        <position position="36"/>
    </location>
</feature>
<feature type="modified residue" description="N6,N6-dimethyllysine; alternate" evidence="2">
    <location>
        <position position="36"/>
    </location>
</feature>
<feature type="modified residue" description="N6-methyllysine; alternate" evidence="2">
    <location>
        <position position="36"/>
    </location>
</feature>
<feature type="modified residue" description="N6,N6-dimethyllysine" evidence="2">
    <location>
        <position position="55"/>
    </location>
</feature>
<feature type="modified residue" description="N6,N6,N6-trimethyllysine; by EEF1AKMT1" evidence="2">
    <location>
        <position position="79"/>
    </location>
</feature>
<feature type="modified residue" description="N6,N6,N6-trimethyllysine; alternate; by EEF1AKMT3" evidence="7">
    <location>
        <position position="165"/>
    </location>
</feature>
<feature type="modified residue" description="N6,N6-dimethyllysine; alternate; by EEF1AKMT3" evidence="2">
    <location>
        <position position="165"/>
    </location>
</feature>
<feature type="modified residue" description="N6-acetyllysine; alternate" evidence="9">
    <location>
        <position position="165"/>
    </location>
</feature>
<feature type="modified residue" description="N6-methyllysine; alternate; by EEF1AKMT3" evidence="2">
    <location>
        <position position="165"/>
    </location>
</feature>
<feature type="modified residue" description="N6-acetyllysine" evidence="9">
    <location>
        <position position="172"/>
    </location>
</feature>
<feature type="modified residue" description="N6-acetyllysine" evidence="9">
    <location>
        <position position="273"/>
    </location>
</feature>
<feature type="modified residue" description="Phosphoserine; by TGFBR1" evidence="2">
    <location>
        <position position="300"/>
    </location>
</feature>
<feature type="modified residue" description="5-glutamyl glycerylphosphorylethanolamine" evidence="6">
    <location>
        <position position="301"/>
    </location>
</feature>
<feature type="modified residue" description="N6,N6,N6-trimethyllysine; by EEF1AKMT2" evidence="2">
    <location>
        <position position="318"/>
    </location>
</feature>
<feature type="modified residue" description="5-glutamyl glycerylphosphorylethanolamine" evidence="6">
    <location>
        <position position="374"/>
    </location>
</feature>
<feature type="modified residue" description="N6-acetyllysine; alternate" evidence="9">
    <location>
        <position position="392"/>
    </location>
</feature>
<feature type="modified residue" description="N6-succinyllysine; alternate" evidence="9">
    <location>
        <position position="392"/>
    </location>
</feature>
<feature type="modified residue" description="Phosphothreonine; by PASK" evidence="2">
    <location>
        <position position="432"/>
    </location>
</feature>
<feature type="modified residue" description="N6-acetyllysine" evidence="9">
    <location>
        <position position="439"/>
    </location>
</feature>
<feature type="cross-link" description="Glycyl lysine isopeptide (Lys-Gly) (interchain with G-Cter in ubiquitin)" evidence="2">
    <location>
        <position position="385"/>
    </location>
</feature>
<feature type="sequence conflict" description="In Ref. 5; AAA37538." evidence="8" ref="5">
    <original>H</original>
    <variation>R</variation>
    <location>
        <position position="7"/>
    </location>
</feature>
<feature type="sequence conflict" description="In Ref. 5; AAA37538." evidence="8" ref="5">
    <original>H</original>
    <variation>L</variation>
    <location>
        <position position="15"/>
    </location>
</feature>
<feature type="sequence conflict" description="In Ref. 5; AAA37538." evidence="8" ref="5">
    <original>T</original>
    <variation>S</variation>
    <location>
        <position position="23"/>
    </location>
</feature>
<feature type="sequence conflict" description="In Ref. 2; CAA31957." evidence="8" ref="2">
    <original>LW</original>
    <variation>QR</variation>
    <location>
        <begin position="77"/>
        <end position="78"/>
    </location>
</feature>
<feature type="sequence conflict" description="In Ref. 6; CAA27324." evidence="8" ref="6">
    <original>S</original>
    <variation>A</variation>
    <location>
        <position position="83"/>
    </location>
</feature>
<feature type="sequence conflict" description="In Ref. 2; CAA31957." evidence="8" ref="2">
    <original>DA</original>
    <variation>ES</variation>
    <location>
        <begin position="91"/>
        <end position="92"/>
    </location>
</feature>
<feature type="sequence conflict" description="In Ref. 5; AAA37538." evidence="8" ref="5">
    <original>Q</original>
    <variation>R</variation>
    <location>
        <position position="108"/>
    </location>
</feature>
<feature type="sequence conflict" description="In Ref. 3; BAC28085." evidence="8" ref="3">
    <original>D</original>
    <variation>G</variation>
    <location>
        <position position="156"/>
    </location>
</feature>
<feature type="sequence conflict" description="In Ref. 1; AAA50406." evidence="8" ref="1">
    <original>S</original>
    <variation>H</variation>
    <location>
        <position position="222"/>
    </location>
</feature>
<feature type="sequence conflict" description="In Ref. 2; CAA31957." evidence="8" ref="2">
    <original>SGT</original>
    <variation>VAP</variation>
    <location>
        <begin position="224"/>
        <end position="226"/>
    </location>
</feature>
<feature type="sequence conflict" description="In Ref. 4; AAH04005." evidence="8" ref="4">
    <original>G</original>
    <variation>D</variation>
    <location>
        <position position="225"/>
    </location>
</feature>
<feature type="sequence conflict" description="In Ref. 2; CAA31957." evidence="8" ref="2">
    <location>
        <position position="239"/>
    </location>
</feature>
<feature type="sequence conflict" description="In Ref. 3; BAC36446." evidence="8" ref="3">
    <original>P</original>
    <variation>T</variation>
    <location>
        <position position="350"/>
    </location>
</feature>
<keyword id="KW-0007">Acetylation</keyword>
<keyword id="KW-1003">Cell membrane</keyword>
<keyword id="KW-0963">Cytoplasm</keyword>
<keyword id="KW-0903">Direct protein sequencing</keyword>
<keyword id="KW-0251">Elongation factor</keyword>
<keyword id="KW-0342">GTP-binding</keyword>
<keyword id="KW-0378">Hydrolase</keyword>
<keyword id="KW-1017">Isopeptide bond</keyword>
<keyword id="KW-0472">Membrane</keyword>
<keyword id="KW-0488">Methylation</keyword>
<keyword id="KW-0547">Nucleotide-binding</keyword>
<keyword id="KW-0539">Nucleus</keyword>
<keyword id="KW-0597">Phosphoprotein</keyword>
<keyword id="KW-0648">Protein biosynthesis</keyword>
<keyword id="KW-1185">Reference proteome</keyword>
<keyword id="KW-0832">Ubl conjugation</keyword>
<gene>
    <name type="primary">Eef1a1</name>
    <name type="synonym">Eef1a</name>
</gene>
<protein>
    <recommendedName>
        <fullName>Elongation factor 1-alpha 1</fullName>
        <shortName>EF-1-alpha-1</shortName>
        <ecNumber evidence="2">3.6.5.-</ecNumber>
    </recommendedName>
    <alternativeName>
        <fullName>Elongation factor Tu</fullName>
        <shortName>EF-Tu</shortName>
    </alternativeName>
    <alternativeName>
        <fullName>Eukaryotic elongation factor 1 A-1</fullName>
        <shortName>eEF1A-1</shortName>
    </alternativeName>
</protein>
<reference key="1">
    <citation type="journal article" date="1988" name="Gene">
        <title>Isolation and mapping of a gene for protein synthesis initiation factor 4A and its expression during differentiation of murine erythroleukemia cells.</title>
        <authorList>
            <person name="Reddy N.S."/>
            <person name="Roth W.W."/>
            <person name="Bragg P.W."/>
            <person name="Wahba A.J."/>
        </authorList>
    </citation>
    <scope>NUCLEOTIDE SEQUENCE [MRNA]</scope>
</reference>
<reference key="2">
    <citation type="journal article" date="1989" name="Nucleic Acids Res.">
        <title>The complete cDNA sequence of mouse elongation factor 1 alpha (EF 1 alpha) mRNA.</title>
        <authorList>
            <person name="Lu X."/>
            <person name="Werner D."/>
        </authorList>
    </citation>
    <scope>NUCLEOTIDE SEQUENCE [MRNA]</scope>
</reference>
<reference key="3">
    <citation type="journal article" date="2005" name="Science">
        <title>The transcriptional landscape of the mammalian genome.</title>
        <authorList>
            <person name="Carninci P."/>
            <person name="Kasukawa T."/>
            <person name="Katayama S."/>
            <person name="Gough J."/>
            <person name="Frith M.C."/>
            <person name="Maeda N."/>
            <person name="Oyama R."/>
            <person name="Ravasi T."/>
            <person name="Lenhard B."/>
            <person name="Wells C."/>
            <person name="Kodzius R."/>
            <person name="Shimokawa K."/>
            <person name="Bajic V.B."/>
            <person name="Brenner S.E."/>
            <person name="Batalov S."/>
            <person name="Forrest A.R."/>
            <person name="Zavolan M."/>
            <person name="Davis M.J."/>
            <person name="Wilming L.G."/>
            <person name="Aidinis V."/>
            <person name="Allen J.E."/>
            <person name="Ambesi-Impiombato A."/>
            <person name="Apweiler R."/>
            <person name="Aturaliya R.N."/>
            <person name="Bailey T.L."/>
            <person name="Bansal M."/>
            <person name="Baxter L."/>
            <person name="Beisel K.W."/>
            <person name="Bersano T."/>
            <person name="Bono H."/>
            <person name="Chalk A.M."/>
            <person name="Chiu K.P."/>
            <person name="Choudhary V."/>
            <person name="Christoffels A."/>
            <person name="Clutterbuck D.R."/>
            <person name="Crowe M.L."/>
            <person name="Dalla E."/>
            <person name="Dalrymple B.P."/>
            <person name="de Bono B."/>
            <person name="Della Gatta G."/>
            <person name="di Bernardo D."/>
            <person name="Down T."/>
            <person name="Engstrom P."/>
            <person name="Fagiolini M."/>
            <person name="Faulkner G."/>
            <person name="Fletcher C.F."/>
            <person name="Fukushima T."/>
            <person name="Furuno M."/>
            <person name="Futaki S."/>
            <person name="Gariboldi M."/>
            <person name="Georgii-Hemming P."/>
            <person name="Gingeras T.R."/>
            <person name="Gojobori T."/>
            <person name="Green R.E."/>
            <person name="Gustincich S."/>
            <person name="Harbers M."/>
            <person name="Hayashi Y."/>
            <person name="Hensch T.K."/>
            <person name="Hirokawa N."/>
            <person name="Hill D."/>
            <person name="Huminiecki L."/>
            <person name="Iacono M."/>
            <person name="Ikeo K."/>
            <person name="Iwama A."/>
            <person name="Ishikawa T."/>
            <person name="Jakt M."/>
            <person name="Kanapin A."/>
            <person name="Katoh M."/>
            <person name="Kawasawa Y."/>
            <person name="Kelso J."/>
            <person name="Kitamura H."/>
            <person name="Kitano H."/>
            <person name="Kollias G."/>
            <person name="Krishnan S.P."/>
            <person name="Kruger A."/>
            <person name="Kummerfeld S.K."/>
            <person name="Kurochkin I.V."/>
            <person name="Lareau L.F."/>
            <person name="Lazarevic D."/>
            <person name="Lipovich L."/>
            <person name="Liu J."/>
            <person name="Liuni S."/>
            <person name="McWilliam S."/>
            <person name="Madan Babu M."/>
            <person name="Madera M."/>
            <person name="Marchionni L."/>
            <person name="Matsuda H."/>
            <person name="Matsuzawa S."/>
            <person name="Miki H."/>
            <person name="Mignone F."/>
            <person name="Miyake S."/>
            <person name="Morris K."/>
            <person name="Mottagui-Tabar S."/>
            <person name="Mulder N."/>
            <person name="Nakano N."/>
            <person name="Nakauchi H."/>
            <person name="Ng P."/>
            <person name="Nilsson R."/>
            <person name="Nishiguchi S."/>
            <person name="Nishikawa S."/>
            <person name="Nori F."/>
            <person name="Ohara O."/>
            <person name="Okazaki Y."/>
            <person name="Orlando V."/>
            <person name="Pang K.C."/>
            <person name="Pavan W.J."/>
            <person name="Pavesi G."/>
            <person name="Pesole G."/>
            <person name="Petrovsky N."/>
            <person name="Piazza S."/>
            <person name="Reed J."/>
            <person name="Reid J.F."/>
            <person name="Ring B.Z."/>
            <person name="Ringwald M."/>
            <person name="Rost B."/>
            <person name="Ruan Y."/>
            <person name="Salzberg S.L."/>
            <person name="Sandelin A."/>
            <person name="Schneider C."/>
            <person name="Schoenbach C."/>
            <person name="Sekiguchi K."/>
            <person name="Semple C.A."/>
            <person name="Seno S."/>
            <person name="Sessa L."/>
            <person name="Sheng Y."/>
            <person name="Shibata Y."/>
            <person name="Shimada H."/>
            <person name="Shimada K."/>
            <person name="Silva D."/>
            <person name="Sinclair B."/>
            <person name="Sperling S."/>
            <person name="Stupka E."/>
            <person name="Sugiura K."/>
            <person name="Sultana R."/>
            <person name="Takenaka Y."/>
            <person name="Taki K."/>
            <person name="Tammoja K."/>
            <person name="Tan S.L."/>
            <person name="Tang S."/>
            <person name="Taylor M.S."/>
            <person name="Tegner J."/>
            <person name="Teichmann S.A."/>
            <person name="Ueda H.R."/>
            <person name="van Nimwegen E."/>
            <person name="Verardo R."/>
            <person name="Wei C.L."/>
            <person name="Yagi K."/>
            <person name="Yamanishi H."/>
            <person name="Zabarovsky E."/>
            <person name="Zhu S."/>
            <person name="Zimmer A."/>
            <person name="Hide W."/>
            <person name="Bult C."/>
            <person name="Grimmond S.M."/>
            <person name="Teasdale R.D."/>
            <person name="Liu E.T."/>
            <person name="Brusic V."/>
            <person name="Quackenbush J."/>
            <person name="Wahlestedt C."/>
            <person name="Mattick J.S."/>
            <person name="Hume D.A."/>
            <person name="Kai C."/>
            <person name="Sasaki D."/>
            <person name="Tomaru Y."/>
            <person name="Fukuda S."/>
            <person name="Kanamori-Katayama M."/>
            <person name="Suzuki M."/>
            <person name="Aoki J."/>
            <person name="Arakawa T."/>
            <person name="Iida J."/>
            <person name="Imamura K."/>
            <person name="Itoh M."/>
            <person name="Kato T."/>
            <person name="Kawaji H."/>
            <person name="Kawagashira N."/>
            <person name="Kawashima T."/>
            <person name="Kojima M."/>
            <person name="Kondo S."/>
            <person name="Konno H."/>
            <person name="Nakano K."/>
            <person name="Ninomiya N."/>
            <person name="Nishio T."/>
            <person name="Okada M."/>
            <person name="Plessy C."/>
            <person name="Shibata K."/>
            <person name="Shiraki T."/>
            <person name="Suzuki S."/>
            <person name="Tagami M."/>
            <person name="Waki K."/>
            <person name="Watahiki A."/>
            <person name="Okamura-Oho Y."/>
            <person name="Suzuki H."/>
            <person name="Kawai J."/>
            <person name="Hayashizaki Y."/>
        </authorList>
    </citation>
    <scope>NUCLEOTIDE SEQUENCE [LARGE SCALE MRNA]</scope>
    <source>
        <strain>C57BL/6J</strain>
        <tissue>Head</tissue>
        <tissue>Testis</tissue>
        <tissue>Thymus</tissue>
    </source>
</reference>
<reference key="4">
    <citation type="journal article" date="2004" name="Genome Res.">
        <title>The status, quality, and expansion of the NIH full-length cDNA project: the Mammalian Gene Collection (MGC).</title>
        <authorList>
            <consortium name="The MGC Project Team"/>
        </authorList>
    </citation>
    <scope>NUCLEOTIDE SEQUENCE [LARGE SCALE MRNA]</scope>
    <source>
        <strain>Czech II</strain>
        <tissue>Mammary tumor</tissue>
        <tissue>Olfactory epithelium</tissue>
    </source>
</reference>
<reference key="5">
    <citation type="journal article" date="1987" name="Mol. Cell. Biol.">
        <title>Expression of a gene for mouse eucaryotic elongation factor Tu during murine erythroleukemic cell differentiation.</title>
        <authorList>
            <person name="Roth W.W."/>
            <person name="Bragg P.W."/>
            <person name="Corrias M.V."/>
            <person name="Reddy N.S."/>
            <person name="Dholakia J.N."/>
            <person name="Wahba A.J."/>
        </authorList>
    </citation>
    <scope>NUCLEOTIDE SEQUENCE [GENOMIC DNA] OF 1-108</scope>
</reference>
<reference key="6">
    <citation type="journal article" date="1986" name="Nucleic Acids Res.">
        <title>Structure of the amino-terminal end of mammalian elongation factor Tu.</title>
        <authorList>
            <person name="Rao T.R."/>
            <person name="Slobin L.I."/>
        </authorList>
    </citation>
    <scope>NUCLEOTIDE SEQUENCE [MRNA] OF 1-94</scope>
</reference>
<reference key="7">
    <citation type="submission" date="2009-01" db="UniProtKB">
        <authorList>
            <person name="Lubec G."/>
            <person name="Kang S.U."/>
            <person name="Yang J.W."/>
            <person name="Zigmond M."/>
            <person name="Sunyer B."/>
            <person name="Chen W.-Q."/>
        </authorList>
    </citation>
    <scope>PROTEIN SEQUENCE OF 6-30; 85-96; 135-146; 155-165; 248-290 AND 431-439</scope>
    <scope>IDENTIFICATION BY MASS SPECTROMETRY</scope>
    <source>
        <strain>C57BL/6J</strain>
        <strain>OF1</strain>
        <tissue>Brain</tissue>
        <tissue>Hippocampus</tissue>
    </source>
</reference>
<reference key="8">
    <citation type="journal article" date="1989" name="J. Biol. Chem.">
        <title>Murine elongation factor 1 alpha (EF-1 alpha) is posttranslationally modified by novel amide-linked ethanolamine-phosphoglycerol moieties. Addition of ethanolamine-phosphoglycerol to specific glutamic acid residues on EF-1 alpha.</title>
        <authorList>
            <person name="Whiteheart S.W."/>
            <person name="Shenbagarmurthi P."/>
            <person name="Chen L."/>
            <person name="Cotter R.J."/>
            <person name="Hart G.W."/>
        </authorList>
    </citation>
    <scope>PROTEIN SEQUENCE OF 291-313 AND 372-376</scope>
    <scope>ETHANOLAMINYLATION AT GLU-301 AND GLU-374</scope>
</reference>
<reference key="9">
    <citation type="journal article" date="2005" name="Biochem. Biophys. Res. Commun.">
        <title>Proteomic identification of proteins conjugated to ISG15 in mouse and human cells.</title>
        <authorList>
            <person name="Giannakopoulos N.V."/>
            <person name="Luo J.K."/>
            <person name="Papov V."/>
            <person name="Zou W."/>
            <person name="Lenschow D.J."/>
            <person name="Jacobs B.S."/>
            <person name="Borden E.C."/>
            <person name="Li J."/>
            <person name="Virgin H.W."/>
            <person name="Zhang D.E."/>
        </authorList>
    </citation>
    <scope>ISGYLATION</scope>
</reference>
<reference key="10">
    <citation type="journal article" date="2010" name="Cell">
        <title>A tissue-specific atlas of mouse protein phosphorylation and expression.</title>
        <authorList>
            <person name="Huttlin E.L."/>
            <person name="Jedrychowski M.P."/>
            <person name="Elias J.E."/>
            <person name="Goswami T."/>
            <person name="Rad R."/>
            <person name="Beausoleil S.A."/>
            <person name="Villen J."/>
            <person name="Haas W."/>
            <person name="Sowa M.E."/>
            <person name="Gygi S.P."/>
        </authorList>
    </citation>
    <scope>IDENTIFICATION BY MASS SPECTROMETRY [LARGE SCALE ANALYSIS]</scope>
    <source>
        <tissue>Brain</tissue>
        <tissue>Brown adipose tissue</tissue>
        <tissue>Heart</tissue>
        <tissue>Kidney</tissue>
        <tissue>Liver</tissue>
        <tissue>Lung</tissue>
        <tissue>Pancreas</tissue>
        <tissue>Spleen</tissue>
        <tissue>Testis</tissue>
    </source>
</reference>
<reference key="11">
    <citation type="journal article" date="2010" name="Mol. Cell. Biochem.">
        <title>The interaction between interferon-induced protein with tetratricopeptide repeats-1 and eukaryotic elongation factor-1A.</title>
        <authorList>
            <person name="Li H.T."/>
            <person name="Su Y.P."/>
            <person name="Cheng T.M."/>
            <person name="Xu J.M."/>
            <person name="Liao J."/>
            <person name="Chen J.C."/>
            <person name="Ji C.Y."/>
            <person name="Ai G.P."/>
            <person name="Wang J.P."/>
        </authorList>
    </citation>
    <scope>IDENTIFICATION BY MASS SPECTROMETRY</scope>
    <scope>INTERACTION WITH IFIT1</scope>
    <scope>SUBCELLULAR LOCATION</scope>
</reference>
<reference key="12">
    <citation type="journal article" date="2013" name="Mol. Cell">
        <title>SIRT5-mediated lysine desuccinylation impacts diverse metabolic pathways.</title>
        <authorList>
            <person name="Park J."/>
            <person name="Chen Y."/>
            <person name="Tishkoff D.X."/>
            <person name="Peng C."/>
            <person name="Tan M."/>
            <person name="Dai L."/>
            <person name="Xie Z."/>
            <person name="Zhang Y."/>
            <person name="Zwaans B.M."/>
            <person name="Skinner M.E."/>
            <person name="Lombard D.B."/>
            <person name="Zhao Y."/>
        </authorList>
    </citation>
    <scope>ACETYLATION [LARGE SCALE ANALYSIS] AT LYS-165; LYS-172; LYS-273; LYS-392 AND LYS-439</scope>
    <scope>SUCCINYLATION [LARGE SCALE ANALYSIS] AT LYS-392</scope>
    <scope>IDENTIFICATION BY MASS SPECTROMETRY [LARGE SCALE ANALYSIS]</scope>
    <source>
        <tissue>Embryonic fibroblast</tissue>
    </source>
</reference>
<reference key="13">
    <citation type="journal article" date="2017" name="Nucleic Acids Res.">
        <title>The novel lysine specific methyltransferase METTL21B affects mRNA translation through inducible and dynamic methylation of Lys-165 in human eukaryotic elongation factor 1 alpha (eEF1A).</title>
        <authorList>
            <person name="Malecki J."/>
            <person name="Aileni V.K."/>
            <person name="Ho A.Y."/>
            <person name="Schwarz J."/>
            <person name="Moen A."/>
            <person name="Soerensen V."/>
            <person name="Nilges B.S."/>
            <person name="Jakobsson M.E."/>
            <person name="Leidel S.A."/>
            <person name="Falnes P.O."/>
        </authorList>
    </citation>
    <scope>METHYLATION AT LYS-165</scope>
</reference>
<comment type="function">
    <text evidence="2 3">Translation elongation factor that catalyzes the GTP-dependent binding of aminoacyl-tRNA (aa-tRNA) to the A-site of ribosomes during the elongation phase of protein synthesis. Base pairing between the mRNA codon and the aa-tRNA anticodon promotes GTP hydrolysis, releasing the aa-tRNA from EEF1A1 and allowing its accommodation into the ribosome. The growing protein chain is subsequently transferred from the P-site peptidyl tRNA to the A-site aa-tRNA, extending it by one amino acid through ribosome-catalyzed peptide bond formation. Also plays a role in the positive regulation of IFNG transcription in T-helper 1 cells as part of an IFNG promoter-binding complex with TXK and PARP1 (By similarity). Also plays a role in cytoskeleton organization by promoting actin bundling.</text>
</comment>
<comment type="catalytic activity">
    <reaction evidence="2">
        <text>GTP + H2O = GDP + phosphate + H(+)</text>
        <dbReference type="Rhea" id="RHEA:19669"/>
        <dbReference type="ChEBI" id="CHEBI:15377"/>
        <dbReference type="ChEBI" id="CHEBI:15378"/>
        <dbReference type="ChEBI" id="CHEBI:37565"/>
        <dbReference type="ChEBI" id="CHEBI:43474"/>
        <dbReference type="ChEBI" id="CHEBI:58189"/>
    </reaction>
    <physiologicalReaction direction="left-to-right" evidence="2">
        <dbReference type="Rhea" id="RHEA:19670"/>
    </physiologicalReaction>
</comment>
<comment type="activity regulation">
    <text evidence="2">Inhibited by plitidepsin, a chemical compound extracted from the ascidian Aplidium albicans.</text>
</comment>
<comment type="subunit">
    <text evidence="1 2 5">Found in a nuclear export complex with XPO5, EEF1A1, Ran and aminoacylated tRNA. Interacts with PARP1. Interacts with KARS1. May interact with ERGIC2. Interacts with IFIT1 (via TPR repeats 4-7) (By similarity). May interact with ERGIC2 (By similarity). Interacts with IFIT1 (via TPR repeats 4-7) (PubMed:19856081). Interacts with DLC1, facilitating distribution to the membrane periphery and ruffles upon growth factor stimulation. Interacts with ZPR1; the interaction occurs in a epidermal growth factor (EGF)-dependent manner (By similarity). Interacts with PPP1R16B (By similarity). Interacts with SPHK1 and SPHK2; both interactions increase SPHK1 and SPHK2 kinase activity (By similarity). Interacts with guanyl-nucleotide exchange factor EEF1B2 (By similarity). Interacts (via middle-region) with HTATIP2 (via N-terminus); the interaction is direct and competes with EEF1A1 binding to guanyl-nucleotide exchange factor EEF1B2, thereby inhibiting GDP for GTP exchange and reactivation of EEF1A1 (By similarity). Interacts with tRNA (By similarity).</text>
</comment>
<comment type="interaction">
    <interactant intactId="EBI-773865">
        <id>P10126</id>
    </interactant>
    <interactant intactId="EBI-1973142">
        <id>Q01534</id>
        <label>TSPY1</label>
    </interactant>
    <organismsDiffer>true</organismsDiffer>
    <experiments>5</experiments>
</comment>
<comment type="subcellular location">
    <subcellularLocation>
        <location evidence="5">Cytoplasm</location>
    </subcellularLocation>
    <subcellularLocation>
        <location evidence="2">Nucleus</location>
    </subcellularLocation>
    <subcellularLocation>
        <location evidence="2">Nucleus</location>
        <location evidence="2">Nucleolus</location>
    </subcellularLocation>
    <subcellularLocation>
        <location evidence="2">Cell membrane</location>
    </subcellularLocation>
    <text evidence="2">Colocalizes with DLC1 at actin-rich regions in the cell periphery. Translocates together with ZPR1 from the cytoplasm to the nucleus and nucleolus after treatment with mitogens. Localization at the cell membrane depends on EEF1A1 phosphorylation status and the presence of PPP1R16B.</text>
</comment>
<comment type="PTM">
    <text evidence="2">ISGylated.</text>
</comment>
<comment type="PTM">
    <text evidence="2">Phosphorylated by TXK. Phosphorylation by PASK increases translation efficiency. Phosphorylated by ROCK2. Phosphorylation by TGFBR1 inhibits translation elongation.</text>
</comment>
<comment type="PTM">
    <text evidence="2">Trimethylated at Lys-79 by EEF1AKMT1. Methylated at Lys-165 by EEF1AKMT3, methylation by EEF1AKMT3 is dynamic as well as inducible by stress conditions, such as ER-stress, and plays a regulatory role on mRNA translation. Trimethylated at Lys-318 by EEF1AKMT2. Mono-, di-, and trimethylated at Lys-36 by EEF1AKMT4; trimethylated form is predominant. Methylation by EEF1AKMT4 contributes to the fine-tuning of translation rates for a subset of tRNAs. Trimethylated at Gly-2 by METTL13. Mono- and dimethylated at Lys-55 by METTL13; dimethylated form is predominant.</text>
</comment>
<comment type="PTM">
    <text evidence="2">Ubiquitinated at Lys-385 by RNF14 in response to ribosome collisions (ribosome stalling), leading to its degradation by the proteasome and rescue of stalled ribosomes.</text>
</comment>
<comment type="similarity">
    <text evidence="8">Belongs to the TRAFAC class translation factor GTPase superfamily. Classic translation factor GTPase family. EF-Tu/EF-1A subfamily.</text>
</comment>
<evidence type="ECO:0000250" key="1">
    <source>
        <dbReference type="UniProtKB" id="P62630"/>
    </source>
</evidence>
<evidence type="ECO:0000250" key="2">
    <source>
        <dbReference type="UniProtKB" id="P68104"/>
    </source>
</evidence>
<evidence type="ECO:0000250" key="3">
    <source>
        <dbReference type="UniProtKB" id="P68105"/>
    </source>
</evidence>
<evidence type="ECO:0000255" key="4"/>
<evidence type="ECO:0000269" key="5">
    <source>
    </source>
</evidence>
<evidence type="ECO:0000269" key="6">
    <source>
    </source>
</evidence>
<evidence type="ECO:0000269" key="7">
    <source>
    </source>
</evidence>
<evidence type="ECO:0000305" key="8"/>
<evidence type="ECO:0007744" key="9">
    <source>
    </source>
</evidence>
<dbReference type="EC" id="3.6.5.-" evidence="2"/>
<dbReference type="EMBL" id="M22432">
    <property type="protein sequence ID" value="AAA50406.1"/>
    <property type="molecule type" value="mRNA"/>
</dbReference>
<dbReference type="EMBL" id="X13661">
    <property type="protein sequence ID" value="CAA31957.1"/>
    <property type="molecule type" value="mRNA"/>
</dbReference>
<dbReference type="EMBL" id="AK032914">
    <property type="protein sequence ID" value="BAC28085.1"/>
    <property type="molecule type" value="mRNA"/>
</dbReference>
<dbReference type="EMBL" id="AK076696">
    <property type="protein sequence ID" value="BAC36446.1"/>
    <property type="molecule type" value="mRNA"/>
</dbReference>
<dbReference type="EMBL" id="AK081725">
    <property type="protein sequence ID" value="BAC38311.1"/>
    <property type="molecule type" value="mRNA"/>
</dbReference>
<dbReference type="EMBL" id="AK083361">
    <property type="protein sequence ID" value="BAC38884.1"/>
    <property type="molecule type" value="mRNA"/>
</dbReference>
<dbReference type="EMBL" id="BC004005">
    <property type="protein sequence ID" value="AAH04005.1"/>
    <property type="molecule type" value="mRNA"/>
</dbReference>
<dbReference type="EMBL" id="BC004067">
    <property type="protein sequence ID" value="AAH04067.1"/>
    <property type="molecule type" value="mRNA"/>
</dbReference>
<dbReference type="EMBL" id="BC005660">
    <property type="protein sequence ID" value="AAH05660.1"/>
    <property type="molecule type" value="mRNA"/>
</dbReference>
<dbReference type="EMBL" id="BC018223">
    <property type="protein sequence ID" value="AAH18223.1"/>
    <property type="molecule type" value="mRNA"/>
</dbReference>
<dbReference type="EMBL" id="BC018485">
    <property type="protein sequence ID" value="AAH18485.1"/>
    <property type="molecule type" value="mRNA"/>
</dbReference>
<dbReference type="EMBL" id="BC083069">
    <property type="protein sequence ID" value="AAH83069.1"/>
    <property type="molecule type" value="mRNA"/>
</dbReference>
<dbReference type="EMBL" id="M17878">
    <property type="protein sequence ID" value="AAA37538.1"/>
    <property type="molecule type" value="Genomic_DNA"/>
</dbReference>
<dbReference type="EMBL" id="X03688">
    <property type="protein sequence ID" value="CAA27324.1"/>
    <property type="molecule type" value="mRNA"/>
</dbReference>
<dbReference type="CCDS" id="CCDS40703.1"/>
<dbReference type="PIR" id="S02114">
    <property type="entry name" value="EFMS1"/>
</dbReference>
<dbReference type="RefSeq" id="NP_034236.2">
    <property type="nucleotide sequence ID" value="NM_010106.2"/>
</dbReference>
<dbReference type="SMR" id="P10126"/>
<dbReference type="BioGRID" id="199385">
    <property type="interactions" value="173"/>
</dbReference>
<dbReference type="DIP" id="DIP-46609N"/>
<dbReference type="FunCoup" id="P10126">
    <property type="interactions" value="2662"/>
</dbReference>
<dbReference type="IntAct" id="P10126">
    <property type="interactions" value="63"/>
</dbReference>
<dbReference type="MINT" id="P10126"/>
<dbReference type="STRING" id="10090.ENSMUSP00000042457"/>
<dbReference type="GlyGen" id="P10126">
    <property type="glycosylation" value="2 sites, 1 N-linked glycan (1 site), 1 O-linked glycan (1 site)"/>
</dbReference>
<dbReference type="iPTMnet" id="P10126"/>
<dbReference type="MetOSite" id="P10126"/>
<dbReference type="PhosphoSitePlus" id="P10126"/>
<dbReference type="SwissPalm" id="P10126"/>
<dbReference type="CPTAC" id="non-CPTAC-3787"/>
<dbReference type="jPOST" id="P10126"/>
<dbReference type="PaxDb" id="10090-ENSMUSP00000042457"/>
<dbReference type="PeptideAtlas" id="P10126"/>
<dbReference type="ProteomicsDB" id="275904"/>
<dbReference type="Pumba" id="P10126"/>
<dbReference type="TopDownProteomics" id="P10126"/>
<dbReference type="Antibodypedia" id="31353">
    <property type="antibodies" value="342 antibodies from 37 providers"/>
</dbReference>
<dbReference type="DNASU" id="13627"/>
<dbReference type="Ensembl" id="ENSMUST00000042235.15">
    <property type="protein sequence ID" value="ENSMUSP00000042457.9"/>
    <property type="gene ID" value="ENSMUSG00000037742.15"/>
</dbReference>
<dbReference type="GeneID" id="13627"/>
<dbReference type="KEGG" id="mmu:13627"/>
<dbReference type="UCSC" id="uc009qun.1">
    <property type="organism name" value="mouse"/>
</dbReference>
<dbReference type="AGR" id="MGI:1096881"/>
<dbReference type="CTD" id="1915"/>
<dbReference type="MGI" id="MGI:1096881">
    <property type="gene designation" value="Eef1a1"/>
</dbReference>
<dbReference type="VEuPathDB" id="HostDB:ENSMUSG00000037742"/>
<dbReference type="eggNOG" id="KOG0052">
    <property type="taxonomic scope" value="Eukaryota"/>
</dbReference>
<dbReference type="GeneTree" id="ENSGT00950000183029"/>
<dbReference type="HOGENOM" id="CLU_007265_3_5_1"/>
<dbReference type="InParanoid" id="P10126"/>
<dbReference type="OMA" id="SPPCYTP"/>
<dbReference type="OrthoDB" id="342024at2759"/>
<dbReference type="PhylomeDB" id="P10126"/>
<dbReference type="TreeFam" id="TF300304"/>
<dbReference type="Reactome" id="R-MMU-156842">
    <property type="pathway name" value="Eukaryotic Translation Elongation"/>
</dbReference>
<dbReference type="Reactome" id="R-MMU-3371511">
    <property type="pathway name" value="HSF1 activation"/>
</dbReference>
<dbReference type="Reactome" id="R-MMU-6798695">
    <property type="pathway name" value="Neutrophil degranulation"/>
</dbReference>
<dbReference type="Reactome" id="R-MMU-8876725">
    <property type="pathway name" value="Protein methylation"/>
</dbReference>
<dbReference type="BioGRID-ORCS" id="13627">
    <property type="hits" value="26 hits in 65 CRISPR screens"/>
</dbReference>
<dbReference type="CD-CODE" id="764D0258">
    <property type="entry name" value="Neuronal RNP granule"/>
</dbReference>
<dbReference type="CD-CODE" id="CE726F99">
    <property type="entry name" value="Postsynaptic density"/>
</dbReference>
<dbReference type="CD-CODE" id="DE1E139C">
    <property type="entry name" value="Chromatoid body"/>
</dbReference>
<dbReference type="ChiTaRS" id="Eef1a1">
    <property type="organism name" value="mouse"/>
</dbReference>
<dbReference type="PRO" id="PR:P10126"/>
<dbReference type="Proteomes" id="UP000000589">
    <property type="component" value="Chromosome 9"/>
</dbReference>
<dbReference type="RNAct" id="P10126">
    <property type="molecule type" value="protein"/>
</dbReference>
<dbReference type="Bgee" id="ENSMUSG00000037742">
    <property type="expression patterns" value="Expressed in epiblast (generic) and 79 other cell types or tissues"/>
</dbReference>
<dbReference type="ExpressionAtlas" id="P10126">
    <property type="expression patterns" value="baseline and differential"/>
</dbReference>
<dbReference type="GO" id="GO:0005737">
    <property type="term" value="C:cytoplasm"/>
    <property type="evidence" value="ECO:0000314"/>
    <property type="project" value="UniProtKB"/>
</dbReference>
<dbReference type="GO" id="GO:0043209">
    <property type="term" value="C:myelin sheath"/>
    <property type="evidence" value="ECO:0007005"/>
    <property type="project" value="UniProtKB"/>
</dbReference>
<dbReference type="GO" id="GO:0005730">
    <property type="term" value="C:nucleolus"/>
    <property type="evidence" value="ECO:0000250"/>
    <property type="project" value="UniProtKB"/>
</dbReference>
<dbReference type="GO" id="GO:0005634">
    <property type="term" value="C:nucleus"/>
    <property type="evidence" value="ECO:0000250"/>
    <property type="project" value="UniProtKB"/>
</dbReference>
<dbReference type="GO" id="GO:0005886">
    <property type="term" value="C:plasma membrane"/>
    <property type="evidence" value="ECO:0000314"/>
    <property type="project" value="MGI"/>
</dbReference>
<dbReference type="GO" id="GO:0005516">
    <property type="term" value="F:calmodulin binding"/>
    <property type="evidence" value="ECO:0000314"/>
    <property type="project" value="UniProtKB"/>
</dbReference>
<dbReference type="GO" id="GO:0005525">
    <property type="term" value="F:GTP binding"/>
    <property type="evidence" value="ECO:0007669"/>
    <property type="project" value="UniProtKB-KW"/>
</dbReference>
<dbReference type="GO" id="GO:0003924">
    <property type="term" value="F:GTPase activity"/>
    <property type="evidence" value="ECO:0000250"/>
    <property type="project" value="UniProtKB"/>
</dbReference>
<dbReference type="GO" id="GO:0019209">
    <property type="term" value="F:kinase activator activity"/>
    <property type="evidence" value="ECO:0000250"/>
    <property type="project" value="UniProtKB"/>
</dbReference>
<dbReference type="GO" id="GO:0003746">
    <property type="term" value="F:translation elongation factor activity"/>
    <property type="evidence" value="ECO:0000250"/>
    <property type="project" value="UniProtKB"/>
</dbReference>
<dbReference type="GO" id="GO:0071364">
    <property type="term" value="P:cellular response to epidermal growth factor stimulus"/>
    <property type="evidence" value="ECO:0000250"/>
    <property type="project" value="UniProtKB"/>
</dbReference>
<dbReference type="GO" id="GO:0006414">
    <property type="term" value="P:translational elongation"/>
    <property type="evidence" value="ECO:0000250"/>
    <property type="project" value="UniProtKB"/>
</dbReference>
<dbReference type="CDD" id="cd01883">
    <property type="entry name" value="EF1_alpha"/>
    <property type="match status" value="1"/>
</dbReference>
<dbReference type="CDD" id="cd03693">
    <property type="entry name" value="EF1_alpha_II"/>
    <property type="match status" value="1"/>
</dbReference>
<dbReference type="CDD" id="cd03705">
    <property type="entry name" value="EF1_alpha_III"/>
    <property type="match status" value="1"/>
</dbReference>
<dbReference type="FunFam" id="2.40.30.10:FF:000005">
    <property type="entry name" value="Elongation factor 1-alpha"/>
    <property type="match status" value="1"/>
</dbReference>
<dbReference type="FunFam" id="3.40.50.300:FF:000090">
    <property type="entry name" value="Elongation factor 1-alpha"/>
    <property type="match status" value="1"/>
</dbReference>
<dbReference type="FunFam" id="2.40.30.10:FF:000168">
    <property type="entry name" value="Elongation factor 1-alpha 2"/>
    <property type="match status" value="1"/>
</dbReference>
<dbReference type="Gene3D" id="3.40.50.300">
    <property type="entry name" value="P-loop containing nucleotide triphosphate hydrolases"/>
    <property type="match status" value="1"/>
</dbReference>
<dbReference type="Gene3D" id="2.40.30.10">
    <property type="entry name" value="Translation factors"/>
    <property type="match status" value="2"/>
</dbReference>
<dbReference type="HAMAP" id="MF_00118_A">
    <property type="entry name" value="EF_Tu_A"/>
    <property type="match status" value="1"/>
</dbReference>
<dbReference type="InterPro" id="IPR004161">
    <property type="entry name" value="EFTu-like_2"/>
</dbReference>
<dbReference type="InterPro" id="IPR031157">
    <property type="entry name" value="G_TR_CS"/>
</dbReference>
<dbReference type="InterPro" id="IPR054696">
    <property type="entry name" value="GTP-eEF1A_C"/>
</dbReference>
<dbReference type="InterPro" id="IPR027417">
    <property type="entry name" value="P-loop_NTPase"/>
</dbReference>
<dbReference type="InterPro" id="IPR000795">
    <property type="entry name" value="T_Tr_GTP-bd_dom"/>
</dbReference>
<dbReference type="InterPro" id="IPR050100">
    <property type="entry name" value="TRAFAC_GTPase_members"/>
</dbReference>
<dbReference type="InterPro" id="IPR009000">
    <property type="entry name" value="Transl_B-barrel_sf"/>
</dbReference>
<dbReference type="InterPro" id="IPR009001">
    <property type="entry name" value="Transl_elong_EF1A/Init_IF2_C"/>
</dbReference>
<dbReference type="InterPro" id="IPR004539">
    <property type="entry name" value="Transl_elong_EF1A_euk/arc"/>
</dbReference>
<dbReference type="NCBIfam" id="TIGR00483">
    <property type="entry name" value="EF-1_alpha"/>
    <property type="match status" value="1"/>
</dbReference>
<dbReference type="NCBIfam" id="NF008969">
    <property type="entry name" value="PRK12317.1"/>
    <property type="match status" value="1"/>
</dbReference>
<dbReference type="PANTHER" id="PTHR23115">
    <property type="entry name" value="TRANSLATION FACTOR"/>
    <property type="match status" value="1"/>
</dbReference>
<dbReference type="Pfam" id="PF22594">
    <property type="entry name" value="GTP-eEF1A_C"/>
    <property type="match status" value="1"/>
</dbReference>
<dbReference type="Pfam" id="PF00009">
    <property type="entry name" value="GTP_EFTU"/>
    <property type="match status" value="1"/>
</dbReference>
<dbReference type="Pfam" id="PF03144">
    <property type="entry name" value="GTP_EFTU_D2"/>
    <property type="match status" value="1"/>
</dbReference>
<dbReference type="PRINTS" id="PR00315">
    <property type="entry name" value="ELONGATNFCT"/>
</dbReference>
<dbReference type="SUPFAM" id="SSF50465">
    <property type="entry name" value="EF-Tu/eEF-1alpha/eIF2-gamma C-terminal domain"/>
    <property type="match status" value="1"/>
</dbReference>
<dbReference type="SUPFAM" id="SSF52540">
    <property type="entry name" value="P-loop containing nucleoside triphosphate hydrolases"/>
    <property type="match status" value="1"/>
</dbReference>
<dbReference type="SUPFAM" id="SSF50447">
    <property type="entry name" value="Translation proteins"/>
    <property type="match status" value="1"/>
</dbReference>
<dbReference type="PROSITE" id="PS00301">
    <property type="entry name" value="G_TR_1"/>
    <property type="match status" value="1"/>
</dbReference>
<dbReference type="PROSITE" id="PS51722">
    <property type="entry name" value="G_TR_2"/>
    <property type="match status" value="1"/>
</dbReference>